<protein>
    <recommendedName>
        <fullName>Ornithine decarboxylase antizyme</fullName>
        <shortName>ODC-Az</shortName>
    </recommendedName>
</protein>
<dbReference type="EMBL" id="AF217279">
    <property type="protein sequence ID" value="AAF68270.1"/>
    <property type="molecule type" value="mRNA"/>
</dbReference>
<dbReference type="SMR" id="Q9NHZ5"/>
<dbReference type="STRING" id="6282.Q9NHZ5"/>
<dbReference type="Proteomes" id="UP000024404">
    <property type="component" value="Unassembled WGS sequence"/>
</dbReference>
<dbReference type="GO" id="GO:0005737">
    <property type="term" value="C:cytoplasm"/>
    <property type="evidence" value="ECO:0007669"/>
    <property type="project" value="TreeGrafter"/>
</dbReference>
<dbReference type="GO" id="GO:0005634">
    <property type="term" value="C:nucleus"/>
    <property type="evidence" value="ECO:0007669"/>
    <property type="project" value="TreeGrafter"/>
</dbReference>
<dbReference type="GO" id="GO:0008073">
    <property type="term" value="F:ornithine decarboxylase inhibitor activity"/>
    <property type="evidence" value="ECO:0007669"/>
    <property type="project" value="InterPro"/>
</dbReference>
<dbReference type="GO" id="GO:0045732">
    <property type="term" value="P:positive regulation of protein catabolic process"/>
    <property type="evidence" value="ECO:0007669"/>
    <property type="project" value="TreeGrafter"/>
</dbReference>
<dbReference type="GO" id="GO:0075523">
    <property type="term" value="P:viral translational frameshifting"/>
    <property type="evidence" value="ECO:0007669"/>
    <property type="project" value="UniProtKB-KW"/>
</dbReference>
<dbReference type="Gene3D" id="3.40.630.60">
    <property type="match status" value="1"/>
</dbReference>
<dbReference type="InterPro" id="IPR016181">
    <property type="entry name" value="Acyl_CoA_acyltransferase"/>
</dbReference>
<dbReference type="InterPro" id="IPR002993">
    <property type="entry name" value="ODC_AZ"/>
</dbReference>
<dbReference type="InterPro" id="IPR038581">
    <property type="entry name" value="ODC_AZ_sf"/>
</dbReference>
<dbReference type="PANTHER" id="PTHR10279">
    <property type="entry name" value="ORNITHINE DECARBOXYLASE ANTIZYME"/>
    <property type="match status" value="1"/>
</dbReference>
<dbReference type="PANTHER" id="PTHR10279:SF10">
    <property type="entry name" value="ORNITHINE DECARBOXYLASE ANTIZYME"/>
    <property type="match status" value="1"/>
</dbReference>
<dbReference type="Pfam" id="PF02100">
    <property type="entry name" value="ODC_AZ"/>
    <property type="match status" value="1"/>
</dbReference>
<dbReference type="SUPFAM" id="SSF55729">
    <property type="entry name" value="Acyl-CoA N-acyltransferases (Nat)"/>
    <property type="match status" value="1"/>
</dbReference>
<dbReference type="PROSITE" id="PS01337">
    <property type="entry name" value="ODC_AZ"/>
    <property type="match status" value="1"/>
</dbReference>
<reference key="1">
    <citation type="journal article" date="2000" name="EMBO J.">
        <title>Conservation of polyamine regulation by translational frameshifting from yeast to mammals.</title>
        <authorList>
            <person name="Ivanov I.P."/>
            <person name="Matsufuji S."/>
            <person name="Murakami Y."/>
            <person name="Gesteland R.F."/>
            <person name="Atkins J.F."/>
        </authorList>
    </citation>
    <scope>NUCLEOTIDE SEQUENCE [MRNA]</scope>
</reference>
<proteinExistence type="evidence at transcript level"/>
<comment type="function">
    <text evidence="1">Ornithine decarboxylase (ODC) antizyme protein that negatively regulates ODC activity and intracellular polyamine biosynthesis and uptake in response to increased intracellular polyamine levels. Binds to ODC monomers, inhibiting the assembly of the functional ODC homodimer, and targets the monomers for ubiquitin-independent proteolytic destruction by the 26S proteasome.</text>
</comment>
<comment type="subunit">
    <text evidence="1">Interacts with ODC1 and thereby sterically blocks ODC homodimerization.</text>
</comment>
<comment type="alternative products">
    <event type="ribosomal frameshifting"/>
    <isoform>
        <id>Q9NHZ5-1</id>
        <name>1</name>
        <sequence type="displayed"/>
    </isoform>
    <text>A ribosomal frameshift occurs between the codons for Ser-28 and Asp-29. An autoregulatory mechanism enables modulation of frameshifting according to the cellular concentration of polyamines.</text>
</comment>
<comment type="similarity">
    <text evidence="2">Belongs to the ODC antizyme family.</text>
</comment>
<evidence type="ECO:0000250" key="1">
    <source>
        <dbReference type="UniProtKB" id="P54368"/>
    </source>
</evidence>
<evidence type="ECO:0000305" key="2"/>
<name>OAZ_ONCVO</name>
<keyword id="KW-1185">Reference proteome</keyword>
<keyword id="KW-0688">Ribosomal frameshifting</keyword>
<accession>Q9NHZ5</accession>
<sequence length="145" mass="16200">MSKLAVSSSFSLLCGNCKRGHVGLECYSDVPTNNLLSNEHLHSLESFVNEVSSEWCCHLVDGNTLAIFLPFDQSTWNLSKGAFVSLLEFCEDNLPIKRILLCLNKINVDETVVSCFKYLGFSPLHPHLYPSCIDSQGVFVMVYSM</sequence>
<organism>
    <name type="scientific">Onchocerca volvulus</name>
    <dbReference type="NCBI Taxonomy" id="6282"/>
    <lineage>
        <taxon>Eukaryota</taxon>
        <taxon>Metazoa</taxon>
        <taxon>Ecdysozoa</taxon>
        <taxon>Nematoda</taxon>
        <taxon>Chromadorea</taxon>
        <taxon>Rhabditida</taxon>
        <taxon>Spirurina</taxon>
        <taxon>Spiruromorpha</taxon>
        <taxon>Filarioidea</taxon>
        <taxon>Onchocercidae</taxon>
        <taxon>Onchocerca</taxon>
    </lineage>
</organism>
<feature type="chain" id="PRO_0000220864" description="Ornithine decarboxylase antizyme">
    <location>
        <begin position="1"/>
        <end position="145"/>
    </location>
</feature>